<organism>
    <name type="scientific">Caenorhabditis elegans</name>
    <dbReference type="NCBI Taxonomy" id="6239"/>
    <lineage>
        <taxon>Eukaryota</taxon>
        <taxon>Metazoa</taxon>
        <taxon>Ecdysozoa</taxon>
        <taxon>Nematoda</taxon>
        <taxon>Chromadorea</taxon>
        <taxon>Rhabditida</taxon>
        <taxon>Rhabditina</taxon>
        <taxon>Rhabditomorpha</taxon>
        <taxon>Rhabditoidea</taxon>
        <taxon>Rhabditidae</taxon>
        <taxon>Peloderinae</taxon>
        <taxon>Caenorhabditis</taxon>
    </lineage>
</organism>
<feature type="chain" id="PRO_0000209709" description="Protein AAR2 homolog">
    <location>
        <begin position="1"/>
        <end position="357"/>
    </location>
</feature>
<protein>
    <recommendedName>
        <fullName>Protein AAR2 homolog</fullName>
    </recommendedName>
    <alternativeName>
        <fullName>AAR2 splicing factor homolog</fullName>
    </alternativeName>
</protein>
<keyword id="KW-1185">Reference proteome</keyword>
<name>AAR2_CAEEL</name>
<dbReference type="EMBL" id="Z48334">
    <property type="protein sequence ID" value="CAA88309.1"/>
    <property type="molecule type" value="Genomic_DNA"/>
</dbReference>
<dbReference type="PIR" id="T20689">
    <property type="entry name" value="T20689"/>
</dbReference>
<dbReference type="RefSeq" id="NP_495708.1">
    <property type="nucleotide sequence ID" value="NM_063307.7"/>
</dbReference>
<dbReference type="SMR" id="Q09305"/>
<dbReference type="BioGRID" id="49083">
    <property type="interactions" value="3"/>
</dbReference>
<dbReference type="DIP" id="DIP-26090N"/>
<dbReference type="FunCoup" id="Q09305">
    <property type="interactions" value="2635"/>
</dbReference>
<dbReference type="IntAct" id="Q09305">
    <property type="interactions" value="3"/>
</dbReference>
<dbReference type="STRING" id="6239.F10B5.2.1"/>
<dbReference type="PaxDb" id="6239-F10B5.2"/>
<dbReference type="PeptideAtlas" id="Q09305"/>
<dbReference type="EnsemblMetazoa" id="F10B5.2.1">
    <property type="protein sequence ID" value="F10B5.2.1"/>
    <property type="gene ID" value="WBGene00008639"/>
</dbReference>
<dbReference type="GeneID" id="184284"/>
<dbReference type="KEGG" id="cel:CELE_F10B5.2"/>
<dbReference type="UCSC" id="F10B5.2">
    <property type="organism name" value="c. elegans"/>
</dbReference>
<dbReference type="AGR" id="WB:WBGene00008639"/>
<dbReference type="CTD" id="184284"/>
<dbReference type="WormBase" id="F10B5.2">
    <property type="protein sequence ID" value="CE01544"/>
    <property type="gene ID" value="WBGene00008639"/>
</dbReference>
<dbReference type="eggNOG" id="KOG3937">
    <property type="taxonomic scope" value="Eukaryota"/>
</dbReference>
<dbReference type="GeneTree" id="ENSGT00390000007796"/>
<dbReference type="HOGENOM" id="CLU_036039_1_0_1"/>
<dbReference type="InParanoid" id="Q09305"/>
<dbReference type="OMA" id="VWQSGGL"/>
<dbReference type="OrthoDB" id="201752at2759"/>
<dbReference type="PhylomeDB" id="Q09305"/>
<dbReference type="PRO" id="PR:Q09305"/>
<dbReference type="Proteomes" id="UP000001940">
    <property type="component" value="Chromosome II"/>
</dbReference>
<dbReference type="Bgee" id="WBGene00008639">
    <property type="expression patterns" value="Expressed in germ line (C elegans) and 4 other cell types or tissues"/>
</dbReference>
<dbReference type="GO" id="GO:0000244">
    <property type="term" value="P:spliceosomal tri-snRNP complex assembly"/>
    <property type="evidence" value="ECO:0000318"/>
    <property type="project" value="GO_Central"/>
</dbReference>
<dbReference type="CDD" id="cd13778">
    <property type="entry name" value="Aar2_C"/>
    <property type="match status" value="1"/>
</dbReference>
<dbReference type="CDD" id="cd13777">
    <property type="entry name" value="Aar2_N"/>
    <property type="match status" value="1"/>
</dbReference>
<dbReference type="FunFam" id="1.25.40.550:FF:000005">
    <property type="entry name" value="Protein AAR2 homolog"/>
    <property type="match status" value="1"/>
</dbReference>
<dbReference type="FunFam" id="2.60.34.20:FF:000001">
    <property type="entry name" value="protein AAR2 homolog"/>
    <property type="match status" value="1"/>
</dbReference>
<dbReference type="Gene3D" id="2.60.34.20">
    <property type="match status" value="1"/>
</dbReference>
<dbReference type="Gene3D" id="1.25.40.550">
    <property type="entry name" value="Aar2, C-terminal domain-like"/>
    <property type="match status" value="1"/>
</dbReference>
<dbReference type="InterPro" id="IPR007946">
    <property type="entry name" value="AAR2"/>
</dbReference>
<dbReference type="InterPro" id="IPR033648">
    <property type="entry name" value="AAR2_C"/>
</dbReference>
<dbReference type="InterPro" id="IPR038514">
    <property type="entry name" value="AAR2_C_sf"/>
</dbReference>
<dbReference type="InterPro" id="IPR033647">
    <property type="entry name" value="Aar2_N"/>
</dbReference>
<dbReference type="InterPro" id="IPR038516">
    <property type="entry name" value="AAR2_N_sf"/>
</dbReference>
<dbReference type="PANTHER" id="PTHR12689">
    <property type="entry name" value="A1 CISTRON SPLICING FACTOR AAR2-RELATED"/>
    <property type="match status" value="1"/>
</dbReference>
<dbReference type="PANTHER" id="PTHR12689:SF4">
    <property type="entry name" value="PROTEIN AAR2 HOMOLOG"/>
    <property type="match status" value="1"/>
</dbReference>
<dbReference type="Pfam" id="PF05282">
    <property type="entry name" value="AAR2"/>
    <property type="match status" value="1"/>
</dbReference>
<dbReference type="Pfam" id="PF20981">
    <property type="entry name" value="AAR2_1st"/>
    <property type="match status" value="1"/>
</dbReference>
<evidence type="ECO:0000305" key="1"/>
<sequence length="357" mass="41683">MGGALPPEIVDYMYRNGAFLLFLGFPQASEFGIDYKSWKTGEKFMGLKMIPPGVHFVYCSIKSAPRIGFFHNFKAGEILVKKWNTESETFEDEEVPTDQISEKKRQLKNMDSSLAPYPYENYRSWYGLTDFITADTVERIHPILGRITSQAELVSLETEFMENAEKEHKDSHFRNRVDRENPVRTRFTDQHGLPIMKIREGYEIRFQDIPPLTVSQNRVGIEYSDRLYRLLRALGGDWKQLLAEMQIAFVCFLQGQVFEGFEQWKRIIHLMSCCPNSLGSEKELFMSFIRVLFFQLKECPTDFFVDIVSRDNFLTTTLSMLFANVRDSAHAGDDLKKKTAQFKQYLTNQFKWDFNCD</sequence>
<gene>
    <name type="ORF">F10B5.2</name>
</gene>
<accession>Q09305</accession>
<reference key="1">
    <citation type="journal article" date="1998" name="Science">
        <title>Genome sequence of the nematode C. elegans: a platform for investigating biology.</title>
        <authorList>
            <consortium name="The C. elegans sequencing consortium"/>
        </authorList>
    </citation>
    <scope>NUCLEOTIDE SEQUENCE [LARGE SCALE GENOMIC DNA]</scope>
    <source>
        <strain>Bristol N2</strain>
    </source>
</reference>
<proteinExistence type="inferred from homology"/>
<comment type="similarity">
    <text evidence="1">Belongs to the AAR2 family.</text>
</comment>